<proteinExistence type="inferred from homology"/>
<comment type="function">
    <text evidence="3">Trans-enoyl reductase; part of the gene cluster that mediates the biosynthesis of talaronoid C, a fusicoccane diterpenoid with an unprecedented tricyclic 5/8/6 ring system (PubMed:36126322). The first step in the pathway is performed by the fusicoccadiene synthase tndC that possesses both prenyl transferase and terpene cyclase activity, converting isopentenyl diphosphate and dimethylallyl diphosphate into geranylgeranyl diphosphate (GGDP) and further converting GGDP into talarodiene, a precursor for talaronoid C (PubMed:36126322). The remaining enzymes from the cluster include the cytochrome P450 monooxygenase tndB, the aldehyde reductase tndE and the alcohol dehydrogenase tndF that are involved in the conversion of talarodiene into talaronoid C (PubMed:36126322).</text>
</comment>
<comment type="pathway">
    <text evidence="6">Secondary metabolite biosynthesis; terpenoid biosynthesis.</text>
</comment>
<comment type="similarity">
    <text evidence="5">Belongs to the zinc-containing alcohol dehydrogenase family.</text>
</comment>
<organism>
    <name type="scientific">Aspergillus flavipes</name>
    <dbReference type="NCBI Taxonomy" id="41900"/>
    <lineage>
        <taxon>Eukaryota</taxon>
        <taxon>Fungi</taxon>
        <taxon>Dikarya</taxon>
        <taxon>Ascomycota</taxon>
        <taxon>Pezizomycotina</taxon>
        <taxon>Eurotiomycetes</taxon>
        <taxon>Eurotiomycetidae</taxon>
        <taxon>Eurotiales</taxon>
        <taxon>Aspergillaceae</taxon>
        <taxon>Aspergillus</taxon>
        <taxon>Aspergillus subgen. Circumdati</taxon>
    </lineage>
</organism>
<sequence>MAREHQAAILPQPGGPLSVGMRPTPKPGPNDVLIEVKAVALNPCDYYQRDYGMPPVLIYPAVLGSDTAGVVVKLGSNVTTVPGPGSRVIAFASSFYQGGSPDHGAFQTYTLAQSEGVIPLPDSLSFEEGAVFPLAVLTALTAWTTIGMRLDTRYSPVDQQAVLIWGASSSVGSFAVQSAKTLGFTIYATASPEHHDLVKTLGADAVFDYKAGDVVSQIVSAVRRDGVQLHTAHCVVDGALQPTLDILKETKGDAPAKVAHSPVLPEGHPTLDNTQIIFNFPSLDEVARSKHMKEVFHGWLNLSLQTGEIVSSPNIQVENGGLSAVHAALDKLKNGVSGTKIVVAL</sequence>
<protein>
    <recommendedName>
        <fullName evidence="4">Trans-enoyl reductase tndF</fullName>
        <ecNumber evidence="6">1.-.-.-</ecNumber>
    </recommendedName>
    <alternativeName>
        <fullName evidence="4">Talaronoid C biosynthesis cluster protein F</fullName>
    </alternativeName>
</protein>
<keyword id="KW-0521">NADP</keyword>
<keyword id="KW-0547">Nucleotide-binding</keyword>
<keyword id="KW-0560">Oxidoreductase</keyword>
<feature type="chain" id="PRO_0000457144" description="Trans-enoyl reductase tndF">
    <location>
        <begin position="1"/>
        <end position="345"/>
    </location>
</feature>
<feature type="region of interest" description="Disordered" evidence="2">
    <location>
        <begin position="1"/>
        <end position="26"/>
    </location>
</feature>
<feature type="binding site" evidence="1">
    <location>
        <begin position="44"/>
        <end position="49"/>
    </location>
    <ligand>
        <name>NADP(+)</name>
        <dbReference type="ChEBI" id="CHEBI:58349"/>
    </ligand>
</feature>
<feature type="binding site" evidence="1">
    <location>
        <begin position="168"/>
        <end position="171"/>
    </location>
    <ligand>
        <name>NADP(+)</name>
        <dbReference type="ChEBI" id="CHEBI:58349"/>
    </ligand>
</feature>
<feature type="binding site" evidence="1">
    <location>
        <begin position="191"/>
        <end position="194"/>
    </location>
    <ligand>
        <name>NADP(+)</name>
        <dbReference type="ChEBI" id="CHEBI:58349"/>
    </ligand>
</feature>
<feature type="binding site" evidence="1">
    <location>
        <position position="209"/>
    </location>
    <ligand>
        <name>NADP(+)</name>
        <dbReference type="ChEBI" id="CHEBI:58349"/>
    </ligand>
</feature>
<feature type="binding site" evidence="1">
    <location>
        <begin position="244"/>
        <end position="245"/>
    </location>
    <ligand>
        <name>NADP(+)</name>
        <dbReference type="ChEBI" id="CHEBI:58349"/>
    </ligand>
</feature>
<name>TNDF_ASPFV</name>
<evidence type="ECO:0000250" key="1">
    <source>
        <dbReference type="UniProtKB" id="Q9Y7D0"/>
    </source>
</evidence>
<evidence type="ECO:0000256" key="2">
    <source>
        <dbReference type="SAM" id="MobiDB-lite"/>
    </source>
</evidence>
<evidence type="ECO:0000269" key="3">
    <source>
    </source>
</evidence>
<evidence type="ECO:0000303" key="4">
    <source>
    </source>
</evidence>
<evidence type="ECO:0000305" key="5"/>
<evidence type="ECO:0000305" key="6">
    <source>
    </source>
</evidence>
<accession>A0A8K1AWG4</accession>
<reference key="1">
    <citation type="journal article" date="2022" name="Org. Lett.">
        <title>Identification and characterization of a cryptic bifunctional type I diterpene synthase involved in talaronoid biosynthesis from a marine-derived fungus.</title>
        <authorList>
            <person name="Zhang P."/>
            <person name="Wu G."/>
            <person name="Heard S.C."/>
            <person name="Niu C."/>
            <person name="Bell S.A."/>
            <person name="Li F."/>
            <person name="Ye Y."/>
            <person name="Zhang Y."/>
            <person name="Winter J.M."/>
        </authorList>
    </citation>
    <scope>NUCLEOTIDE SEQUENCE [GENOMIC DNA]</scope>
    <scope>FUNCTION</scope>
    <source>
        <strain>CNL-338</strain>
    </source>
</reference>
<gene>
    <name evidence="4" type="primary">tndF</name>
</gene>
<dbReference type="EC" id="1.-.-.-" evidence="6"/>
<dbReference type="EMBL" id="MW248390">
    <property type="protein sequence ID" value="QVR97765.1"/>
    <property type="molecule type" value="Genomic_DNA"/>
</dbReference>
<dbReference type="SMR" id="A0A8K1AWG4"/>
<dbReference type="UniPathway" id="UPA00213"/>
<dbReference type="GO" id="GO:0000166">
    <property type="term" value="F:nucleotide binding"/>
    <property type="evidence" value="ECO:0007669"/>
    <property type="project" value="UniProtKB-KW"/>
</dbReference>
<dbReference type="GO" id="GO:0016651">
    <property type="term" value="F:oxidoreductase activity, acting on NAD(P)H"/>
    <property type="evidence" value="ECO:0007669"/>
    <property type="project" value="InterPro"/>
</dbReference>
<dbReference type="GO" id="GO:0016114">
    <property type="term" value="P:terpenoid biosynthetic process"/>
    <property type="evidence" value="ECO:0007669"/>
    <property type="project" value="UniProtKB-UniPathway"/>
</dbReference>
<dbReference type="CDD" id="cd08249">
    <property type="entry name" value="enoyl_reductase_like"/>
    <property type="match status" value="1"/>
</dbReference>
<dbReference type="Gene3D" id="3.90.180.10">
    <property type="entry name" value="Medium-chain alcohol dehydrogenases, catalytic domain"/>
    <property type="match status" value="1"/>
</dbReference>
<dbReference type="Gene3D" id="3.40.50.720">
    <property type="entry name" value="NAD(P)-binding Rossmann-like Domain"/>
    <property type="match status" value="1"/>
</dbReference>
<dbReference type="InterPro" id="IPR013149">
    <property type="entry name" value="ADH-like_C"/>
</dbReference>
<dbReference type="InterPro" id="IPR013154">
    <property type="entry name" value="ADH-like_N"/>
</dbReference>
<dbReference type="InterPro" id="IPR011032">
    <property type="entry name" value="GroES-like_sf"/>
</dbReference>
<dbReference type="InterPro" id="IPR036291">
    <property type="entry name" value="NAD(P)-bd_dom_sf"/>
</dbReference>
<dbReference type="InterPro" id="IPR020843">
    <property type="entry name" value="PKS_ER"/>
</dbReference>
<dbReference type="InterPro" id="IPR047122">
    <property type="entry name" value="Trans-enoyl_RdTase-like"/>
</dbReference>
<dbReference type="PANTHER" id="PTHR45348">
    <property type="entry name" value="HYPOTHETICAL OXIDOREDUCTASE (EUROFUNG)"/>
    <property type="match status" value="1"/>
</dbReference>
<dbReference type="PANTHER" id="PTHR45348:SF2">
    <property type="entry name" value="ZINC-TYPE ALCOHOL DEHYDROGENASE-LIKE PROTEIN C2E1P3.01"/>
    <property type="match status" value="1"/>
</dbReference>
<dbReference type="Pfam" id="PF08240">
    <property type="entry name" value="ADH_N"/>
    <property type="match status" value="1"/>
</dbReference>
<dbReference type="Pfam" id="PF00107">
    <property type="entry name" value="ADH_zinc_N"/>
    <property type="match status" value="1"/>
</dbReference>
<dbReference type="SMART" id="SM00829">
    <property type="entry name" value="PKS_ER"/>
    <property type="match status" value="1"/>
</dbReference>
<dbReference type="SUPFAM" id="SSF50129">
    <property type="entry name" value="GroES-like"/>
    <property type="match status" value="1"/>
</dbReference>
<dbReference type="SUPFAM" id="SSF51735">
    <property type="entry name" value="NAD(P)-binding Rossmann-fold domains"/>
    <property type="match status" value="1"/>
</dbReference>